<accession>Q5F9Y6</accession>
<feature type="chain" id="PRO_0000098813" description="Tryptophan synthase alpha chain">
    <location>
        <begin position="1"/>
        <end position="261"/>
    </location>
</feature>
<feature type="active site" description="Proton acceptor" evidence="1">
    <location>
        <position position="47"/>
    </location>
</feature>
<feature type="active site" description="Proton acceptor" evidence="1">
    <location>
        <position position="58"/>
    </location>
</feature>
<sequence>MSRIRQAFAALDGGKALIPYIAVGDPDIRTTLALMHGMVASGADILELGVPFSDPMADGPVIQRAAERALANGISLRDVLDVVRKFRETDTQTPVVLMGYLNPIHKMGYREFAQEAAKAGVDGVLTVDSPIETIDSLYRELKDNEVDCIFLIAPTTTEDRIKTIAELAGGFVYYVSLKGVTGAASLDTDEVSRKIEYLRQYIDIPIGVGFGISNAESARKIGRVAAAIIVGSRIVKEIENNAGNEAAAVGALVKELKDAVR</sequence>
<reference key="1">
    <citation type="submission" date="2003-03" db="EMBL/GenBank/DDBJ databases">
        <title>The complete genome sequence of Neisseria gonorrhoeae.</title>
        <authorList>
            <person name="Lewis L.A."/>
            <person name="Gillaspy A.F."/>
            <person name="McLaughlin R.E."/>
            <person name="Gipson M."/>
            <person name="Ducey T.F."/>
            <person name="Ownbey T."/>
            <person name="Hartman K."/>
            <person name="Nydick C."/>
            <person name="Carson M.B."/>
            <person name="Vaughn J."/>
            <person name="Thomson C."/>
            <person name="Song L."/>
            <person name="Lin S."/>
            <person name="Yuan X."/>
            <person name="Najar F."/>
            <person name="Zhan M."/>
            <person name="Ren Q."/>
            <person name="Zhu H."/>
            <person name="Qi S."/>
            <person name="Kenton S.M."/>
            <person name="Lai H."/>
            <person name="White J.D."/>
            <person name="Clifton S."/>
            <person name="Roe B.A."/>
            <person name="Dyer D.W."/>
        </authorList>
    </citation>
    <scope>NUCLEOTIDE SEQUENCE [LARGE SCALE GENOMIC DNA]</scope>
    <source>
        <strain>ATCC 700825 / FA 1090</strain>
    </source>
</reference>
<keyword id="KW-0028">Amino-acid biosynthesis</keyword>
<keyword id="KW-0057">Aromatic amino acid biosynthesis</keyword>
<keyword id="KW-0456">Lyase</keyword>
<keyword id="KW-1185">Reference proteome</keyword>
<keyword id="KW-0822">Tryptophan biosynthesis</keyword>
<evidence type="ECO:0000255" key="1">
    <source>
        <dbReference type="HAMAP-Rule" id="MF_00131"/>
    </source>
</evidence>
<dbReference type="EC" id="4.2.1.20" evidence="1"/>
<dbReference type="EMBL" id="AE004969">
    <property type="protein sequence ID" value="AAW89001.1"/>
    <property type="molecule type" value="Genomic_DNA"/>
</dbReference>
<dbReference type="RefSeq" id="WP_003694852.1">
    <property type="nucleotide sequence ID" value="NC_002946.2"/>
</dbReference>
<dbReference type="RefSeq" id="YP_207413.1">
    <property type="nucleotide sequence ID" value="NC_002946.2"/>
</dbReference>
<dbReference type="SMR" id="Q5F9Y6"/>
<dbReference type="STRING" id="242231.NGO_0248"/>
<dbReference type="GeneID" id="66752585"/>
<dbReference type="KEGG" id="ngo:NGO_0248"/>
<dbReference type="PATRIC" id="fig|242231.10.peg.306"/>
<dbReference type="HOGENOM" id="CLU_016734_0_0_4"/>
<dbReference type="UniPathway" id="UPA00035">
    <property type="reaction ID" value="UER00044"/>
</dbReference>
<dbReference type="Proteomes" id="UP000000535">
    <property type="component" value="Chromosome"/>
</dbReference>
<dbReference type="GO" id="GO:0005829">
    <property type="term" value="C:cytosol"/>
    <property type="evidence" value="ECO:0007669"/>
    <property type="project" value="TreeGrafter"/>
</dbReference>
<dbReference type="GO" id="GO:0004834">
    <property type="term" value="F:tryptophan synthase activity"/>
    <property type="evidence" value="ECO:0007669"/>
    <property type="project" value="UniProtKB-UniRule"/>
</dbReference>
<dbReference type="CDD" id="cd04724">
    <property type="entry name" value="Tryptophan_synthase_alpha"/>
    <property type="match status" value="1"/>
</dbReference>
<dbReference type="FunFam" id="3.20.20.70:FF:000037">
    <property type="entry name" value="Tryptophan synthase alpha chain"/>
    <property type="match status" value="1"/>
</dbReference>
<dbReference type="Gene3D" id="3.20.20.70">
    <property type="entry name" value="Aldolase class I"/>
    <property type="match status" value="1"/>
</dbReference>
<dbReference type="HAMAP" id="MF_00131">
    <property type="entry name" value="Trp_synth_alpha"/>
    <property type="match status" value="1"/>
</dbReference>
<dbReference type="InterPro" id="IPR013785">
    <property type="entry name" value="Aldolase_TIM"/>
</dbReference>
<dbReference type="InterPro" id="IPR011060">
    <property type="entry name" value="RibuloseP-bd_barrel"/>
</dbReference>
<dbReference type="InterPro" id="IPR018204">
    <property type="entry name" value="Trp_synthase_alpha_AS"/>
</dbReference>
<dbReference type="InterPro" id="IPR002028">
    <property type="entry name" value="Trp_synthase_suA"/>
</dbReference>
<dbReference type="NCBIfam" id="TIGR00262">
    <property type="entry name" value="trpA"/>
    <property type="match status" value="1"/>
</dbReference>
<dbReference type="PANTHER" id="PTHR43406:SF1">
    <property type="entry name" value="TRYPTOPHAN SYNTHASE ALPHA CHAIN, CHLOROPLASTIC"/>
    <property type="match status" value="1"/>
</dbReference>
<dbReference type="PANTHER" id="PTHR43406">
    <property type="entry name" value="TRYPTOPHAN SYNTHASE, ALPHA CHAIN"/>
    <property type="match status" value="1"/>
</dbReference>
<dbReference type="Pfam" id="PF00290">
    <property type="entry name" value="Trp_syntA"/>
    <property type="match status" value="1"/>
</dbReference>
<dbReference type="SUPFAM" id="SSF51366">
    <property type="entry name" value="Ribulose-phoshate binding barrel"/>
    <property type="match status" value="1"/>
</dbReference>
<dbReference type="PROSITE" id="PS00167">
    <property type="entry name" value="TRP_SYNTHASE_ALPHA"/>
    <property type="match status" value="1"/>
</dbReference>
<name>TRPA_NEIG1</name>
<organism>
    <name type="scientific">Neisseria gonorrhoeae (strain ATCC 700825 / FA 1090)</name>
    <dbReference type="NCBI Taxonomy" id="242231"/>
    <lineage>
        <taxon>Bacteria</taxon>
        <taxon>Pseudomonadati</taxon>
        <taxon>Pseudomonadota</taxon>
        <taxon>Betaproteobacteria</taxon>
        <taxon>Neisseriales</taxon>
        <taxon>Neisseriaceae</taxon>
        <taxon>Neisseria</taxon>
    </lineage>
</organism>
<proteinExistence type="inferred from homology"/>
<gene>
    <name evidence="1" type="primary">trpA</name>
    <name type="ordered locus">NGO_0248</name>
</gene>
<protein>
    <recommendedName>
        <fullName evidence="1">Tryptophan synthase alpha chain</fullName>
        <ecNumber evidence="1">4.2.1.20</ecNumber>
    </recommendedName>
</protein>
<comment type="function">
    <text evidence="1">The alpha subunit is responsible for the aldol cleavage of indoleglycerol phosphate to indole and glyceraldehyde 3-phosphate.</text>
</comment>
<comment type="catalytic activity">
    <reaction evidence="1">
        <text>(1S,2R)-1-C-(indol-3-yl)glycerol 3-phosphate + L-serine = D-glyceraldehyde 3-phosphate + L-tryptophan + H2O</text>
        <dbReference type="Rhea" id="RHEA:10532"/>
        <dbReference type="ChEBI" id="CHEBI:15377"/>
        <dbReference type="ChEBI" id="CHEBI:33384"/>
        <dbReference type="ChEBI" id="CHEBI:57912"/>
        <dbReference type="ChEBI" id="CHEBI:58866"/>
        <dbReference type="ChEBI" id="CHEBI:59776"/>
        <dbReference type="EC" id="4.2.1.20"/>
    </reaction>
</comment>
<comment type="pathway">
    <text evidence="1">Amino-acid biosynthesis; L-tryptophan biosynthesis; L-tryptophan from chorismate: step 5/5.</text>
</comment>
<comment type="subunit">
    <text evidence="1">Tetramer of two alpha and two beta chains.</text>
</comment>
<comment type="similarity">
    <text evidence="1">Belongs to the TrpA family.</text>
</comment>